<reference key="1">
    <citation type="journal article" date="2008" name="J. Bacteriol.">
        <title>The genome of Heliobacterium modesticaldum, a phototrophic representative of the Firmicutes containing the simplest photosynthetic apparatus.</title>
        <authorList>
            <person name="Sattley W.M."/>
            <person name="Madigan M.T."/>
            <person name="Swingley W.D."/>
            <person name="Cheung P.C."/>
            <person name="Clocksin K.M."/>
            <person name="Conrad A.L."/>
            <person name="Dejesa L.C."/>
            <person name="Honchak B.M."/>
            <person name="Jung D.O."/>
            <person name="Karbach L.E."/>
            <person name="Kurdoglu A."/>
            <person name="Lahiri S."/>
            <person name="Mastrian S.D."/>
            <person name="Page L.E."/>
            <person name="Taylor H.L."/>
            <person name="Wang Z.T."/>
            <person name="Raymond J."/>
            <person name="Chen M."/>
            <person name="Blankenship R.E."/>
            <person name="Touchman J.W."/>
        </authorList>
    </citation>
    <scope>NUCLEOTIDE SEQUENCE [LARGE SCALE GENOMIC DNA]</scope>
    <source>
        <strain>ATCC 51547 / Ice1</strain>
    </source>
</reference>
<comment type="function">
    <text evidence="1">Catalyzes the rearrangement of 1-deoxy-D-xylulose 5-phosphate (DXP) to produce the thiazole phosphate moiety of thiamine. Sulfur is provided by the thiocarboxylate moiety of the carrier protein ThiS. In vitro, sulfur can be provided by H(2)S.</text>
</comment>
<comment type="catalytic activity">
    <reaction evidence="1">
        <text>[ThiS sulfur-carrier protein]-C-terminal-Gly-aminoethanethioate + 2-iminoacetate + 1-deoxy-D-xylulose 5-phosphate = [ThiS sulfur-carrier protein]-C-terminal Gly-Gly + 2-[(2R,5Z)-2-carboxy-4-methylthiazol-5(2H)-ylidene]ethyl phosphate + 2 H2O + H(+)</text>
        <dbReference type="Rhea" id="RHEA:26297"/>
        <dbReference type="Rhea" id="RHEA-COMP:12909"/>
        <dbReference type="Rhea" id="RHEA-COMP:19908"/>
        <dbReference type="ChEBI" id="CHEBI:15377"/>
        <dbReference type="ChEBI" id="CHEBI:15378"/>
        <dbReference type="ChEBI" id="CHEBI:57792"/>
        <dbReference type="ChEBI" id="CHEBI:62899"/>
        <dbReference type="ChEBI" id="CHEBI:77846"/>
        <dbReference type="ChEBI" id="CHEBI:90778"/>
        <dbReference type="ChEBI" id="CHEBI:232372"/>
        <dbReference type="EC" id="2.8.1.10"/>
    </reaction>
</comment>
<comment type="pathway">
    <text evidence="1">Cofactor biosynthesis; thiamine diphosphate biosynthesis.</text>
</comment>
<comment type="subunit">
    <text evidence="1">Homotetramer. Forms heterodimers with either ThiH or ThiS.</text>
</comment>
<comment type="subcellular location">
    <subcellularLocation>
        <location evidence="1">Cytoplasm</location>
    </subcellularLocation>
</comment>
<comment type="similarity">
    <text evidence="1">Belongs to the ThiG family.</text>
</comment>
<sequence length="255" mass="26925">MDRLVIGGRELKNRLFIGSGKFADERVIRDIVAQTGVEVVTVALRRVSLSGDGENILHCIPKECVLLPNTSGARTAEEAIRIARLARAAGCGNWVKIEVISDNKYLLPDNNETIKATGVLAEEGFVVLPYMHPDLYAAKELERAGAAAVMPLGAPIGTNRGLKTKEIVRILIEECSVPVIVDAGIGKPSEAAEAMEMGAAACLVNTAIATAGDPLVMARAFSQAVAAGRLAYLAQPGERTEYARASSPLTGFLGS</sequence>
<accession>B0TG92</accession>
<feature type="chain" id="PRO_1000196868" description="Thiazole synthase">
    <location>
        <begin position="1"/>
        <end position="255"/>
    </location>
</feature>
<feature type="active site" description="Schiff-base intermediate with DXP" evidence="1">
    <location>
        <position position="96"/>
    </location>
</feature>
<feature type="binding site" evidence="1">
    <location>
        <position position="157"/>
    </location>
    <ligand>
        <name>1-deoxy-D-xylulose 5-phosphate</name>
        <dbReference type="ChEBI" id="CHEBI:57792"/>
    </ligand>
</feature>
<feature type="binding site" evidence="1">
    <location>
        <begin position="183"/>
        <end position="184"/>
    </location>
    <ligand>
        <name>1-deoxy-D-xylulose 5-phosphate</name>
        <dbReference type="ChEBI" id="CHEBI:57792"/>
    </ligand>
</feature>
<feature type="binding site" evidence="1">
    <location>
        <begin position="205"/>
        <end position="206"/>
    </location>
    <ligand>
        <name>1-deoxy-D-xylulose 5-phosphate</name>
        <dbReference type="ChEBI" id="CHEBI:57792"/>
    </ligand>
</feature>
<evidence type="ECO:0000255" key="1">
    <source>
        <dbReference type="HAMAP-Rule" id="MF_00443"/>
    </source>
</evidence>
<name>THIG_HELMI</name>
<keyword id="KW-0963">Cytoplasm</keyword>
<keyword id="KW-1185">Reference proteome</keyword>
<keyword id="KW-0704">Schiff base</keyword>
<keyword id="KW-0784">Thiamine biosynthesis</keyword>
<keyword id="KW-0808">Transferase</keyword>
<protein>
    <recommendedName>
        <fullName evidence="1">Thiazole synthase</fullName>
        <ecNumber evidence="1">2.8.1.10</ecNumber>
    </recommendedName>
</protein>
<proteinExistence type="inferred from homology"/>
<gene>
    <name evidence="1" type="primary">thiG</name>
    <name type="ordered locus">Helmi_19630</name>
    <name type="ORF">HM1_2031</name>
</gene>
<dbReference type="EC" id="2.8.1.10" evidence="1"/>
<dbReference type="EMBL" id="CP000930">
    <property type="protein sequence ID" value="ABZ84588.1"/>
    <property type="molecule type" value="Genomic_DNA"/>
</dbReference>
<dbReference type="RefSeq" id="WP_012283088.1">
    <property type="nucleotide sequence ID" value="NC_010337.2"/>
</dbReference>
<dbReference type="SMR" id="B0TG92"/>
<dbReference type="STRING" id="498761.HM1_2031"/>
<dbReference type="KEGG" id="hmo:HM1_2031"/>
<dbReference type="eggNOG" id="COG2022">
    <property type="taxonomic scope" value="Bacteria"/>
</dbReference>
<dbReference type="HOGENOM" id="CLU_062233_1_0_9"/>
<dbReference type="OrthoDB" id="9805935at2"/>
<dbReference type="UniPathway" id="UPA00060"/>
<dbReference type="Proteomes" id="UP000008550">
    <property type="component" value="Chromosome"/>
</dbReference>
<dbReference type="GO" id="GO:0005737">
    <property type="term" value="C:cytoplasm"/>
    <property type="evidence" value="ECO:0007669"/>
    <property type="project" value="UniProtKB-SubCell"/>
</dbReference>
<dbReference type="GO" id="GO:1990107">
    <property type="term" value="F:thiazole synthase activity"/>
    <property type="evidence" value="ECO:0007669"/>
    <property type="project" value="UniProtKB-EC"/>
</dbReference>
<dbReference type="GO" id="GO:0009229">
    <property type="term" value="P:thiamine diphosphate biosynthetic process"/>
    <property type="evidence" value="ECO:0007669"/>
    <property type="project" value="UniProtKB-UniRule"/>
</dbReference>
<dbReference type="CDD" id="cd04728">
    <property type="entry name" value="ThiG"/>
    <property type="match status" value="1"/>
</dbReference>
<dbReference type="Gene3D" id="3.20.20.70">
    <property type="entry name" value="Aldolase class I"/>
    <property type="match status" value="1"/>
</dbReference>
<dbReference type="HAMAP" id="MF_00443">
    <property type="entry name" value="ThiG"/>
    <property type="match status" value="1"/>
</dbReference>
<dbReference type="InterPro" id="IPR013785">
    <property type="entry name" value="Aldolase_TIM"/>
</dbReference>
<dbReference type="InterPro" id="IPR033983">
    <property type="entry name" value="Thiazole_synthase_ThiG"/>
</dbReference>
<dbReference type="InterPro" id="IPR008867">
    <property type="entry name" value="ThiG"/>
</dbReference>
<dbReference type="PANTHER" id="PTHR34266">
    <property type="entry name" value="THIAZOLE SYNTHASE"/>
    <property type="match status" value="1"/>
</dbReference>
<dbReference type="PANTHER" id="PTHR34266:SF2">
    <property type="entry name" value="THIAZOLE SYNTHASE"/>
    <property type="match status" value="1"/>
</dbReference>
<dbReference type="Pfam" id="PF05690">
    <property type="entry name" value="ThiG"/>
    <property type="match status" value="1"/>
</dbReference>
<dbReference type="SUPFAM" id="SSF110399">
    <property type="entry name" value="ThiG-like"/>
    <property type="match status" value="1"/>
</dbReference>
<organism>
    <name type="scientific">Heliobacterium modesticaldum (strain ATCC 51547 / Ice1)</name>
    <dbReference type="NCBI Taxonomy" id="498761"/>
    <lineage>
        <taxon>Bacteria</taxon>
        <taxon>Bacillati</taxon>
        <taxon>Bacillota</taxon>
        <taxon>Clostridia</taxon>
        <taxon>Eubacteriales</taxon>
        <taxon>Heliobacteriaceae</taxon>
        <taxon>Heliomicrobium</taxon>
    </lineage>
</organism>